<protein>
    <recommendedName>
        <fullName evidence="2">DNA-directed primase/polymerase protein</fullName>
        <ecNumber evidence="2">2.7.7.102</ecNumber>
        <ecNumber evidence="2">2.7.7.7</ecNumber>
    </recommendedName>
</protein>
<accession>Q08DZ8</accession>
<comment type="function">
    <text evidence="1 2">DNA primase and DNA polymerase required to tolerate replication-stalling lesions by bypassing them. Required to facilitate mitochondrial and nuclear replication fork progression by initiating de novo DNA synthesis using dNTPs and acting as an error-prone DNA polymerase able to bypass certain DNA lesions. Shows a high capacity to tolerate DNA damage lesions such as 8oxoG and abasic sites in DNA. Provides different translesion synthesis alternatives when DNA replication is stalled: able to synthesize DNA primers downstream of lesions, such as ultraviolet (UV) lesions, R-loops and G-quadruplexes, to allow DNA replication to continue. Can also realign primers ahead of 'unreadable lesions' such as abasic sites and 6-4 photoproduct (6-4 pyrimidine-pyrimidinone), thereby skipping the lesion. Repriming avoids fork degradation while leading to accumulation of internal ssDNA gaps behind the forks. Also able to incorporate nucleotides opposite DNA lesions such as 8oxoG, like a regular translesion synthesis DNA polymerase. Also required for reinitiating stalled forks after UV damage during nuclear DNA replication. Required for mitochondrial DNA (mtDNA) synthesis and replication, by reinitiating synthesis after UV damage or in the presence of chain-terminating nucleotides (By similarity). Prevents APOBEC family-mediated DNA mutagenesis by repriming downstream of abasic site to prohibit error-prone translesion synthesis (By similarity). Has non-overlapping function with POLH. In addition to its role in DNA damage response, also required to maintain efficient nuclear and mitochondrial DNA replication in unperturbed cells (By similarity).</text>
</comment>
<comment type="catalytic activity">
    <reaction evidence="2">
        <text>ssDNA + n NTP = ssDNA/pppN(pN)n-1 hybrid + (n-1) diphosphate.</text>
        <dbReference type="EC" id="2.7.7.102"/>
    </reaction>
</comment>
<comment type="catalytic activity">
    <reaction evidence="2">
        <text>DNA(n) + a 2'-deoxyribonucleoside 5'-triphosphate = DNA(n+1) + diphosphate</text>
        <dbReference type="Rhea" id="RHEA:22508"/>
        <dbReference type="Rhea" id="RHEA-COMP:17339"/>
        <dbReference type="Rhea" id="RHEA-COMP:17340"/>
        <dbReference type="ChEBI" id="CHEBI:33019"/>
        <dbReference type="ChEBI" id="CHEBI:61560"/>
        <dbReference type="ChEBI" id="CHEBI:173112"/>
        <dbReference type="EC" id="2.7.7.7"/>
    </reaction>
    <physiologicalReaction direction="left-to-right" evidence="2">
        <dbReference type="Rhea" id="RHEA:22509"/>
    </physiologicalReaction>
</comment>
<comment type="cofactor">
    <cofactor evidence="2">
        <name>Mn(2+)</name>
        <dbReference type="ChEBI" id="CHEBI:29035"/>
    </cofactor>
    <text evidence="2">Can act both with Mn(2+) and Mg(2+) as cofactor in vitro, but Mn(2+) is the preferred cofactor in vivo. The polymerase activity incorporates correct dNTPs with much higher efficiency with Mn(2+) than with Mg(2+). The fidelity is slightly more accurate when Mg(2+) is the cofactor compared to Mn(2+). In the presence of Mn(2+), a conformational transition step from non-productive to productive PRIMPOL:DNA complexes limits the enzymatic turnover, whereas in the presence of Mg(2+), the chemical step becomes rate limiting.</text>
</comment>
<comment type="subunit">
    <text evidence="2">Interacts with RPA1; leading to recruitment to chromatin and stimulate DNA primase activity. Interacts with SSBP1. Interacts with POLDIP2; leading to enhance DNA polymerase activity.</text>
</comment>
<comment type="subcellular location">
    <subcellularLocation>
        <location evidence="2">Nucleus</location>
    </subcellularLocation>
    <subcellularLocation>
        <location evidence="2">Mitochondrion matrix</location>
    </subcellularLocation>
    <subcellularLocation>
        <location evidence="2">Chromosome</location>
    </subcellularLocation>
    <text evidence="2">Present in the nucleus, but a larger fraction is localized inside mitochondria. Associates with nuclear chromatin during the G1 and S phases of unperturbed cell cycles. Recruited to stalled replication forks following interaction with RPA1.</text>
</comment>
<comment type="domain">
    <text evidence="2">The zinc knuckle motif binds zinc and is required for the DNA primase activity. It facilitates the binding and selection of the 5'-nucleotide of the newly synthesized primer and the recognition of preferred initiation sites.</text>
</comment>
<comment type="domain">
    <text evidence="2">The RPA1-binding motifs (RBM) mediate interaction with RPA1 and are essential for recruitment to chromatin. The interaction is primarily mediated by RPA1-binding motif 1, which binds to the basic cleft of RPA1, with motif 2 plays a supporting role in RPA1-binding.</text>
</comment>
<comment type="domain">
    <text evidence="2">The presence of an Asp-Aaa-Glu (DxE) motif in the metal-binding active site favors the use of Mn(2+) ions to achieve optimal incoming nucleotide stabilization, especially required during primer synthesis. Glu-116 is required to stabilize the incoming nucleotide at the 3'-site.</text>
</comment>
<comment type="similarity">
    <text evidence="5">Belongs to the eukaryotic-type primase small subunit family.</text>
</comment>
<organism>
    <name type="scientific">Bos taurus</name>
    <name type="common">Bovine</name>
    <dbReference type="NCBI Taxonomy" id="9913"/>
    <lineage>
        <taxon>Eukaryota</taxon>
        <taxon>Metazoa</taxon>
        <taxon>Chordata</taxon>
        <taxon>Craniata</taxon>
        <taxon>Vertebrata</taxon>
        <taxon>Euteleostomi</taxon>
        <taxon>Mammalia</taxon>
        <taxon>Eutheria</taxon>
        <taxon>Laurasiatheria</taxon>
        <taxon>Artiodactyla</taxon>
        <taxon>Ruminantia</taxon>
        <taxon>Pecora</taxon>
        <taxon>Bovidae</taxon>
        <taxon>Bovinae</taxon>
        <taxon>Bos</taxon>
    </lineage>
</organism>
<reference key="1">
    <citation type="submission" date="2006-09" db="EMBL/GenBank/DDBJ databases">
        <authorList>
            <consortium name="NIH - Mammalian Gene Collection (MGC) project"/>
        </authorList>
    </citation>
    <scope>NUCLEOTIDE SEQUENCE [LARGE SCALE MRNA]</scope>
    <source>
        <strain>Hereford</strain>
        <tissue>Brain cortex</tissue>
    </source>
</reference>
<gene>
    <name evidence="2" type="primary">PRIMPOL</name>
</gene>
<dbReference type="EC" id="2.7.7.102" evidence="2"/>
<dbReference type="EC" id="2.7.7.7" evidence="2"/>
<dbReference type="EMBL" id="BC123492">
    <property type="protein sequence ID" value="AAI23493.1"/>
    <property type="molecule type" value="mRNA"/>
</dbReference>
<dbReference type="RefSeq" id="NP_001068956.1">
    <property type="nucleotide sequence ID" value="NM_001075488.1"/>
</dbReference>
<dbReference type="RefSeq" id="XP_010818555.1">
    <property type="nucleotide sequence ID" value="XM_010820253.2"/>
</dbReference>
<dbReference type="RefSeq" id="XP_010818556.1">
    <property type="nucleotide sequence ID" value="XM_010820254.2"/>
</dbReference>
<dbReference type="RefSeq" id="XP_059738170.1">
    <property type="nucleotide sequence ID" value="XM_059882187.1"/>
</dbReference>
<dbReference type="RefSeq" id="XP_059738171.1">
    <property type="nucleotide sequence ID" value="XM_059882188.1"/>
</dbReference>
<dbReference type="RefSeq" id="XP_059738172.1">
    <property type="nucleotide sequence ID" value="XM_059882189.1"/>
</dbReference>
<dbReference type="SMR" id="Q08DZ8"/>
<dbReference type="FunCoup" id="Q08DZ8">
    <property type="interactions" value="3532"/>
</dbReference>
<dbReference type="STRING" id="9913.ENSBTAP00000025112"/>
<dbReference type="PaxDb" id="9913-ENSBTAP00000025112"/>
<dbReference type="GeneID" id="511080"/>
<dbReference type="KEGG" id="bta:511080"/>
<dbReference type="CTD" id="201973"/>
<dbReference type="VEuPathDB" id="HostDB:ENSBTAG00000018863"/>
<dbReference type="eggNOG" id="ENOG502QS1Q">
    <property type="taxonomic scope" value="Eukaryota"/>
</dbReference>
<dbReference type="HOGENOM" id="CLU_027838_0_0_1"/>
<dbReference type="InParanoid" id="Q08DZ8"/>
<dbReference type="OMA" id="HYEVIQD"/>
<dbReference type="OrthoDB" id="5988181at2759"/>
<dbReference type="TreeFam" id="TF328961"/>
<dbReference type="Proteomes" id="UP000009136">
    <property type="component" value="Chromosome 27"/>
</dbReference>
<dbReference type="Bgee" id="ENSBTAG00000018863">
    <property type="expression patterns" value="Expressed in oocyte and 105 other cell types or tissues"/>
</dbReference>
<dbReference type="GO" id="GO:0000428">
    <property type="term" value="C:DNA-directed RNA polymerase complex"/>
    <property type="evidence" value="ECO:0007669"/>
    <property type="project" value="UniProtKB-KW"/>
</dbReference>
<dbReference type="GO" id="GO:0005759">
    <property type="term" value="C:mitochondrial matrix"/>
    <property type="evidence" value="ECO:0000250"/>
    <property type="project" value="UniProtKB"/>
</dbReference>
<dbReference type="GO" id="GO:0005634">
    <property type="term" value="C:nucleus"/>
    <property type="evidence" value="ECO:0000250"/>
    <property type="project" value="UniProtKB"/>
</dbReference>
<dbReference type="GO" id="GO:0005657">
    <property type="term" value="C:replication fork"/>
    <property type="evidence" value="ECO:0000250"/>
    <property type="project" value="UniProtKB"/>
</dbReference>
<dbReference type="GO" id="GO:0003682">
    <property type="term" value="F:chromatin binding"/>
    <property type="evidence" value="ECO:0000250"/>
    <property type="project" value="UniProtKB"/>
</dbReference>
<dbReference type="GO" id="GO:0003887">
    <property type="term" value="F:DNA-directed DNA polymerase activity"/>
    <property type="evidence" value="ECO:0000250"/>
    <property type="project" value="UniProtKB"/>
</dbReference>
<dbReference type="GO" id="GO:0003899">
    <property type="term" value="F:DNA-directed RNA polymerase activity"/>
    <property type="evidence" value="ECO:0000250"/>
    <property type="project" value="UniProtKB"/>
</dbReference>
<dbReference type="GO" id="GO:0030145">
    <property type="term" value="F:manganese ion binding"/>
    <property type="evidence" value="ECO:0000250"/>
    <property type="project" value="UniProtKB"/>
</dbReference>
<dbReference type="GO" id="GO:0008270">
    <property type="term" value="F:zinc ion binding"/>
    <property type="evidence" value="ECO:0000250"/>
    <property type="project" value="UniProtKB"/>
</dbReference>
<dbReference type="GO" id="GO:0006269">
    <property type="term" value="P:DNA replication, synthesis of primer"/>
    <property type="evidence" value="ECO:0007669"/>
    <property type="project" value="InterPro"/>
</dbReference>
<dbReference type="GO" id="GO:0042276">
    <property type="term" value="P:error-prone translesion synthesis"/>
    <property type="evidence" value="ECO:0000250"/>
    <property type="project" value="UniProtKB"/>
</dbReference>
<dbReference type="GO" id="GO:0043504">
    <property type="term" value="P:mitochondrial DNA repair"/>
    <property type="evidence" value="ECO:0000250"/>
    <property type="project" value="UniProtKB"/>
</dbReference>
<dbReference type="GO" id="GO:0006264">
    <property type="term" value="P:mitochondrial DNA replication"/>
    <property type="evidence" value="ECO:0000250"/>
    <property type="project" value="UniProtKB"/>
</dbReference>
<dbReference type="GO" id="GO:0062176">
    <property type="term" value="P:R-loop processing"/>
    <property type="evidence" value="ECO:0000250"/>
    <property type="project" value="UniProtKB"/>
</dbReference>
<dbReference type="GO" id="GO:0031297">
    <property type="term" value="P:replication fork processing"/>
    <property type="evidence" value="ECO:0000250"/>
    <property type="project" value="UniProtKB"/>
</dbReference>
<dbReference type="GO" id="GO:0009411">
    <property type="term" value="P:response to UV"/>
    <property type="evidence" value="ECO:0000250"/>
    <property type="project" value="UniProtKB"/>
</dbReference>
<dbReference type="GO" id="GO:0019985">
    <property type="term" value="P:translesion synthesis"/>
    <property type="evidence" value="ECO:0000250"/>
    <property type="project" value="UniProtKB"/>
</dbReference>
<dbReference type="InterPro" id="IPR002755">
    <property type="entry name" value="DNA_primase_S"/>
</dbReference>
<dbReference type="InterPro" id="IPR044917">
    <property type="entry name" value="PRIMPOL"/>
</dbReference>
<dbReference type="PANTHER" id="PTHR31399">
    <property type="entry name" value="DNA-DIRECTED PRIMASE / POLYMERASE PROTEIN"/>
    <property type="match status" value="1"/>
</dbReference>
<dbReference type="PANTHER" id="PTHR31399:SF0">
    <property type="entry name" value="DNA-DIRECTED PRIMASE_POLYMERASE PROTEIN"/>
    <property type="match status" value="1"/>
</dbReference>
<dbReference type="Pfam" id="PF01896">
    <property type="entry name" value="DNA_primase_S"/>
    <property type="match status" value="1"/>
</dbReference>
<dbReference type="Pfam" id="PF03121">
    <property type="entry name" value="Herpes_UL52"/>
    <property type="match status" value="1"/>
</dbReference>
<name>PRIPO_BOVIN</name>
<keyword id="KW-0158">Chromosome</keyword>
<keyword id="KW-0175">Coiled coil</keyword>
<keyword id="KW-0227">DNA damage</keyword>
<keyword id="KW-0234">DNA repair</keyword>
<keyword id="KW-0239">DNA-directed DNA polymerase</keyword>
<keyword id="KW-0240">DNA-directed RNA polymerase</keyword>
<keyword id="KW-0464">Manganese</keyword>
<keyword id="KW-0479">Metal-binding</keyword>
<keyword id="KW-0496">Mitochondrion</keyword>
<keyword id="KW-0548">Nucleotidyltransferase</keyword>
<keyword id="KW-0539">Nucleus</keyword>
<keyword id="KW-0597">Phosphoprotein</keyword>
<keyword id="KW-1185">Reference proteome</keyword>
<keyword id="KW-0804">Transcription</keyword>
<keyword id="KW-0808">Transferase</keyword>
<keyword id="KW-0862">Zinc</keyword>
<evidence type="ECO:0000250" key="1">
    <source>
        <dbReference type="UniProtKB" id="Q6P1E7"/>
    </source>
</evidence>
<evidence type="ECO:0000250" key="2">
    <source>
        <dbReference type="UniProtKB" id="Q96LW4"/>
    </source>
</evidence>
<evidence type="ECO:0000255" key="3"/>
<evidence type="ECO:0000256" key="4">
    <source>
        <dbReference type="SAM" id="MobiDB-lite"/>
    </source>
</evidence>
<evidence type="ECO:0000305" key="5"/>
<feature type="chain" id="PRO_0000279394" description="DNA-directed primase/polymerase protein">
    <location>
        <begin position="1"/>
        <end position="555"/>
    </location>
</feature>
<feature type="region of interest" description="Disordered" evidence="4">
    <location>
        <begin position="210"/>
        <end position="230"/>
    </location>
</feature>
<feature type="region of interest" description="Interaction with RPA1" evidence="2">
    <location>
        <begin position="480"/>
        <end position="555"/>
    </location>
</feature>
<feature type="region of interest" description="Disordered" evidence="4">
    <location>
        <begin position="480"/>
        <end position="503"/>
    </location>
</feature>
<feature type="coiled-coil region" evidence="3">
    <location>
        <begin position="1"/>
        <end position="22"/>
    </location>
</feature>
<feature type="short sequence motif" description="Zinc knuckle motif" evidence="2">
    <location>
        <begin position="418"/>
        <end position="451"/>
    </location>
</feature>
<feature type="short sequence motif" description="RPA1-binding motif 1" evidence="2">
    <location>
        <begin position="509"/>
        <end position="523"/>
    </location>
</feature>
<feature type="short sequence motif" description="RPA1-binding motif 2" evidence="2">
    <location>
        <begin position="543"/>
        <end position="551"/>
    </location>
</feature>
<feature type="compositionally biased region" description="Polar residues" evidence="4">
    <location>
        <begin position="219"/>
        <end position="230"/>
    </location>
</feature>
<feature type="binding site" evidence="2">
    <location>
        <position position="76"/>
    </location>
    <ligand>
        <name>substrate</name>
    </ligand>
</feature>
<feature type="binding site" evidence="2">
    <location>
        <begin position="114"/>
        <end position="116"/>
    </location>
    <ligand>
        <name>substrate</name>
    </ligand>
</feature>
<feature type="binding site" evidence="2">
    <location>
        <position position="114"/>
    </location>
    <ligand>
        <name>Mn(2+)</name>
        <dbReference type="ChEBI" id="CHEBI:29035"/>
        <note>catalytic</note>
    </ligand>
</feature>
<feature type="binding site" evidence="2">
    <location>
        <position position="116"/>
    </location>
    <ligand>
        <name>Mn(2+)</name>
        <dbReference type="ChEBI" id="CHEBI:29035"/>
        <note>catalytic</note>
    </ligand>
</feature>
<feature type="binding site" evidence="2">
    <location>
        <begin position="165"/>
        <end position="169"/>
    </location>
    <ligand>
        <name>substrate</name>
    </ligand>
</feature>
<feature type="binding site" evidence="2">
    <location>
        <begin position="288"/>
        <end position="291"/>
    </location>
    <ligand>
        <name>substrate</name>
    </ligand>
</feature>
<feature type="binding site" evidence="2">
    <location>
        <position position="297"/>
    </location>
    <ligand>
        <name>substrate</name>
    </ligand>
</feature>
<feature type="binding site" evidence="2">
    <location>
        <position position="418"/>
    </location>
    <ligand>
        <name>Zn(2+)</name>
        <dbReference type="ChEBI" id="CHEBI:29105"/>
    </ligand>
</feature>
<feature type="binding site" evidence="2">
    <location>
        <position position="425"/>
    </location>
    <ligand>
        <name>Zn(2+)</name>
        <dbReference type="ChEBI" id="CHEBI:29105"/>
    </ligand>
</feature>
<feature type="binding site" evidence="2">
    <location>
        <position position="445"/>
    </location>
    <ligand>
        <name>Zn(2+)</name>
        <dbReference type="ChEBI" id="CHEBI:29105"/>
    </ligand>
</feature>
<feature type="binding site" evidence="2">
    <location>
        <position position="450"/>
    </location>
    <ligand>
        <name>Zn(2+)</name>
        <dbReference type="ChEBI" id="CHEBI:29105"/>
    </ligand>
</feature>
<feature type="modified residue" description="Phosphoserine" evidence="2">
    <location>
        <position position="255"/>
    </location>
</feature>
<proteinExistence type="evidence at transcript level"/>
<sequence>MKRKWEATLKQIEERASHYERKPLSSVYRPRLSKPEEPPSIWKLFHRQTQAFNFVKSCKQEVHVFALECKVGDGQRIYLVTTYTQLWFYYKSRRNLLHCYEVIPENAVCKLYFDLEFNKLANPGADGKKMVALLIEHVCKALQEFYTVNCSAEDVLNLDSSTEEKFSRHLIFQLHDVAFKDNIHVGNFVRKILQPAFHLIASEDEDMTPETTGHEFTHFSETPSEQGTCFSKMSTDIDVGESQTSNSEKLGRLGSAQQSSPDLSFLIVKNDMGEKRLFVDLGVYTRNRNFRLYKSSKIGKYVALEVAEDNKFFPIQSKNISKENQYFLSSLVSNVRFSDALRILTCDVPQSKQRVQCFSRTGTSVEAIEGFQCSPYPEIDQFVLSLVNKNGIKGGIRRWNYFFPEELLVYDICKYRWCENIGRAHRSNNIMILVDLKNEVWYQKCHDPVCKAENFKSDCFPLPAEVCLLSLLKEGEEFTTDTTADTETKSPHGPSSSVLSKGAFSDADWDNGIDDTYILEATEDAELAEAAENSLLAYNRMDEIPDELLIEVLQE</sequence>